<organism>
    <name type="scientific">Haemophilus influenzae (strain ATCC 51907 / DSM 11121 / KW20 / Rd)</name>
    <dbReference type="NCBI Taxonomy" id="71421"/>
    <lineage>
        <taxon>Bacteria</taxon>
        <taxon>Pseudomonadati</taxon>
        <taxon>Pseudomonadota</taxon>
        <taxon>Gammaproteobacteria</taxon>
        <taxon>Pasteurellales</taxon>
        <taxon>Pasteurellaceae</taxon>
        <taxon>Haemophilus</taxon>
    </lineage>
</organism>
<dbReference type="EMBL" id="L42023">
    <property type="protein sequence ID" value="AAC22179.1"/>
    <property type="molecule type" value="Genomic_DNA"/>
</dbReference>
<dbReference type="PIR" id="C64154">
    <property type="entry name" value="C64154"/>
</dbReference>
<dbReference type="RefSeq" id="NP_438679.1">
    <property type="nucleotide sequence ID" value="NC_000907.1"/>
</dbReference>
<dbReference type="SMR" id="P44744"/>
<dbReference type="STRING" id="71421.HI_0521"/>
<dbReference type="DNASU" id="950665"/>
<dbReference type="EnsemblBacteria" id="AAC22179">
    <property type="protein sequence ID" value="AAC22179"/>
    <property type="gene ID" value="HI_0521"/>
</dbReference>
<dbReference type="KEGG" id="hin:HI_0521"/>
<dbReference type="PATRIC" id="fig|71421.8.peg.540"/>
<dbReference type="eggNOG" id="COG1328">
    <property type="taxonomic scope" value="Bacteria"/>
</dbReference>
<dbReference type="HOGENOM" id="CLU_046504_1_0_6"/>
<dbReference type="OrthoDB" id="6189458at2"/>
<dbReference type="PhylomeDB" id="P44744"/>
<dbReference type="BioCyc" id="HINF71421:G1GJ1-534-MONOMER"/>
<dbReference type="Proteomes" id="UP000000579">
    <property type="component" value="Chromosome"/>
</dbReference>
<dbReference type="Gene3D" id="3.20.70.20">
    <property type="match status" value="1"/>
</dbReference>
<dbReference type="InterPro" id="IPR016905">
    <property type="entry name" value="Glycyl_radical_YjjI-like"/>
</dbReference>
<dbReference type="NCBIfam" id="TIGR04040">
    <property type="entry name" value="glycyl_YjjI"/>
    <property type="match status" value="1"/>
</dbReference>
<dbReference type="Pfam" id="PF11230">
    <property type="entry name" value="YjjI-like"/>
    <property type="match status" value="1"/>
</dbReference>
<dbReference type="PIRSF" id="PIRSF028991">
    <property type="entry name" value="Glycl_rad_HI0521_prd"/>
    <property type="match status" value="1"/>
</dbReference>
<dbReference type="SUPFAM" id="SSF51998">
    <property type="entry name" value="PFL-like glycyl radical enzymes"/>
    <property type="match status" value="1"/>
</dbReference>
<feature type="chain" id="PRO_0000169808" description="Uncharacterized protein HI_0521">
    <location>
        <begin position="1"/>
        <end position="514"/>
    </location>
</feature>
<sequence>MLASLQDILDTVKANNLTYHQKLMTLGNIAERLFDPRDLLGYTDEEWGFLQNQMICDLCEGYAIYRPRYILPDYNVYIQKGCEFLELPPPKDLDEALDGLLILYSHVPSITTYPVYIGRLDVLLEPFITDEEKDYIKIKRFLNHIDKTVPDSFCHANIGPYDTKAGRLILRAVIDLEAPTPNMTIRYDKSKTSREFAELAAKACLLVSKPSFANDAYYISDLGEEYGVASCYNALPECGGAYTLTRLRLGTIARTCKSADEMLNELLPRVAKCALSTMDKRHKFVVEESNFFNSSFLEKEGFIKRTNFTGMFAIVGLADATNHLLQCEGLNETFGKSVRGDEIATAIMDKLKEITDAHEGVYAERTGNRYLLHAQVGASNHEEDKRNAPAHRIRVGEEPTLLAHLKQSAPFHKYFPSGTGDLFAFDQTYVDHCDAVVDIIDGAFSLGYRYITTYLKNTDLIRVTGYLVKKSEVEKYRKGEVALRDTTWYGSGTDECANVFDRQLRDEKDVIAEK</sequence>
<proteinExistence type="evidence at protein level"/>
<accession>P44744</accession>
<reference key="1">
    <citation type="journal article" date="1995" name="Science">
        <title>Whole-genome random sequencing and assembly of Haemophilus influenzae Rd.</title>
        <authorList>
            <person name="Fleischmann R.D."/>
            <person name="Adams M.D."/>
            <person name="White O."/>
            <person name="Clayton R.A."/>
            <person name="Kirkness E.F."/>
            <person name="Kerlavage A.R."/>
            <person name="Bult C.J."/>
            <person name="Tomb J.-F."/>
            <person name="Dougherty B.A."/>
            <person name="Merrick J.M."/>
            <person name="McKenney K."/>
            <person name="Sutton G.G."/>
            <person name="FitzHugh W."/>
            <person name="Fields C.A."/>
            <person name="Gocayne J.D."/>
            <person name="Scott J.D."/>
            <person name="Shirley R."/>
            <person name="Liu L.-I."/>
            <person name="Glodek A."/>
            <person name="Kelley J.M."/>
            <person name="Weidman J.F."/>
            <person name="Phillips C.A."/>
            <person name="Spriggs T."/>
            <person name="Hedblom E."/>
            <person name="Cotton M.D."/>
            <person name="Utterback T.R."/>
            <person name="Hanna M.C."/>
            <person name="Nguyen D.T."/>
            <person name="Saudek D.M."/>
            <person name="Brandon R.C."/>
            <person name="Fine L.D."/>
            <person name="Fritchman J.L."/>
            <person name="Fuhrmann J.L."/>
            <person name="Geoghagen N.S.M."/>
            <person name="Gnehm C.L."/>
            <person name="McDonald L.A."/>
            <person name="Small K.V."/>
            <person name="Fraser C.M."/>
            <person name="Smith H.O."/>
            <person name="Venter J.C."/>
        </authorList>
    </citation>
    <scope>NUCLEOTIDE SEQUENCE [LARGE SCALE GENOMIC DNA]</scope>
    <source>
        <strain>ATCC 51907 / DSM 11121 / KW20 / Rd</strain>
    </source>
</reference>
<reference key="2">
    <citation type="journal article" date="2000" name="Electrophoresis">
        <title>Two-dimensional map of the proteome of Haemophilus influenzae.</title>
        <authorList>
            <person name="Langen H."/>
            <person name="Takacs B."/>
            <person name="Evers S."/>
            <person name="Berndt P."/>
            <person name="Lahm H.W."/>
            <person name="Wipf B."/>
            <person name="Gray C."/>
            <person name="Fountoulakis M."/>
        </authorList>
    </citation>
    <scope>IDENTIFICATION BY MASS SPECTROMETRY</scope>
    <source>
        <strain>ATCC 51907 / DSM 11121 / KW20 / Rd</strain>
    </source>
</reference>
<gene>
    <name type="ordered locus">HI_0521</name>
</gene>
<protein>
    <recommendedName>
        <fullName>Uncharacterized protein HI_0521</fullName>
    </recommendedName>
</protein>
<keyword id="KW-1185">Reference proteome</keyword>
<name>Y521_HAEIN</name>
<comment type="similarity">
    <text evidence="1">To E.coli YjjI.</text>
</comment>
<evidence type="ECO:0000305" key="1"/>